<proteinExistence type="inferred from homology"/>
<dbReference type="EMBL" id="CT027831">
    <property type="protein sequence ID" value="CAN88103.1"/>
    <property type="molecule type" value="Genomic_DNA"/>
</dbReference>
<dbReference type="EMBL" id="BC090902">
    <property type="protein sequence ID" value="AAH90902.1"/>
    <property type="molecule type" value="mRNA"/>
</dbReference>
<dbReference type="RefSeq" id="NP_001013546.1">
    <property type="nucleotide sequence ID" value="NM_001013528.3"/>
</dbReference>
<dbReference type="SMR" id="Q5BKW8"/>
<dbReference type="FunCoup" id="Q5BKW8">
    <property type="interactions" value="1473"/>
</dbReference>
<dbReference type="STRING" id="7955.ENSDARP00000093933"/>
<dbReference type="PaxDb" id="7955-ENSDARP00000093933"/>
<dbReference type="Ensembl" id="ENSDART00000103159">
    <property type="protein sequence ID" value="ENSDARP00000093933"/>
    <property type="gene ID" value="ENSDARG00000070358"/>
</dbReference>
<dbReference type="GeneID" id="541401"/>
<dbReference type="KEGG" id="dre:541401"/>
<dbReference type="AGR" id="ZFIN:ZDB-GENE-050320-101"/>
<dbReference type="CTD" id="113444"/>
<dbReference type="ZFIN" id="ZDB-GENE-050320-101">
    <property type="gene designation" value="smim12"/>
</dbReference>
<dbReference type="eggNOG" id="ENOG502S2AD">
    <property type="taxonomic scope" value="Eukaryota"/>
</dbReference>
<dbReference type="HOGENOM" id="CLU_160787_0_0_1"/>
<dbReference type="InParanoid" id="Q5BKW8"/>
<dbReference type="OMA" id="YHLEWFL"/>
<dbReference type="OrthoDB" id="10052506at2759"/>
<dbReference type="PhylomeDB" id="Q5BKW8"/>
<dbReference type="TreeFam" id="TF328614"/>
<dbReference type="PRO" id="PR:Q5BKW8"/>
<dbReference type="Proteomes" id="UP000000437">
    <property type="component" value="Chromosome 19"/>
</dbReference>
<dbReference type="Bgee" id="ENSDARG00000070358">
    <property type="expression patterns" value="Expressed in blastula and 29 other cell types or tissues"/>
</dbReference>
<dbReference type="GO" id="GO:0016020">
    <property type="term" value="C:membrane"/>
    <property type="evidence" value="ECO:0007669"/>
    <property type="project" value="UniProtKB-SubCell"/>
</dbReference>
<dbReference type="InterPro" id="IPR031933">
    <property type="entry name" value="UPF0767"/>
</dbReference>
<dbReference type="PANTHER" id="PTHR28599">
    <property type="entry name" value="SMALL INTEGRAL MEMBRANE PROTEIN 12"/>
    <property type="match status" value="1"/>
</dbReference>
<dbReference type="PANTHER" id="PTHR28599:SF1">
    <property type="entry name" value="SMALL INTEGRAL MEMBRANE PROTEIN 12"/>
    <property type="match status" value="1"/>
</dbReference>
<dbReference type="Pfam" id="PF15990">
    <property type="entry name" value="UPF0767"/>
    <property type="match status" value="1"/>
</dbReference>
<evidence type="ECO:0000255" key="1"/>
<evidence type="ECO:0000305" key="2"/>
<accession>Q5BKW8</accession>
<organism>
    <name type="scientific">Danio rerio</name>
    <name type="common">Zebrafish</name>
    <name type="synonym">Brachydanio rerio</name>
    <dbReference type="NCBI Taxonomy" id="7955"/>
    <lineage>
        <taxon>Eukaryota</taxon>
        <taxon>Metazoa</taxon>
        <taxon>Chordata</taxon>
        <taxon>Craniata</taxon>
        <taxon>Vertebrata</taxon>
        <taxon>Euteleostomi</taxon>
        <taxon>Actinopterygii</taxon>
        <taxon>Neopterygii</taxon>
        <taxon>Teleostei</taxon>
        <taxon>Ostariophysi</taxon>
        <taxon>Cypriniformes</taxon>
        <taxon>Danionidae</taxon>
        <taxon>Danioninae</taxon>
        <taxon>Danio</taxon>
    </lineage>
</organism>
<comment type="subcellular location">
    <subcellularLocation>
        <location evidence="2">Membrane</location>
        <topology evidence="2">Single-pass membrane protein</topology>
    </subcellularLocation>
</comment>
<comment type="similarity">
    <text evidence="2">Belongs to the SMIM12 family.</text>
</comment>
<protein>
    <recommendedName>
        <fullName>Small integral membrane protein 12</fullName>
    </recommendedName>
</protein>
<feature type="chain" id="PRO_0000414324" description="Small integral membrane protein 12">
    <location>
        <begin position="1"/>
        <end position="91"/>
    </location>
</feature>
<feature type="transmembrane region" description="Helical" evidence="1">
    <location>
        <begin position="12"/>
        <end position="34"/>
    </location>
</feature>
<keyword id="KW-0472">Membrane</keyword>
<keyword id="KW-1185">Reference proteome</keyword>
<keyword id="KW-0812">Transmembrane</keyword>
<keyword id="KW-1133">Transmembrane helix</keyword>
<reference key="1">
    <citation type="journal article" date="2013" name="Nature">
        <title>The zebrafish reference genome sequence and its relationship to the human genome.</title>
        <authorList>
            <person name="Howe K."/>
            <person name="Clark M.D."/>
            <person name="Torroja C.F."/>
            <person name="Torrance J."/>
            <person name="Berthelot C."/>
            <person name="Muffato M."/>
            <person name="Collins J.E."/>
            <person name="Humphray S."/>
            <person name="McLaren K."/>
            <person name="Matthews L."/>
            <person name="McLaren S."/>
            <person name="Sealy I."/>
            <person name="Caccamo M."/>
            <person name="Churcher C."/>
            <person name="Scott C."/>
            <person name="Barrett J.C."/>
            <person name="Koch R."/>
            <person name="Rauch G.J."/>
            <person name="White S."/>
            <person name="Chow W."/>
            <person name="Kilian B."/>
            <person name="Quintais L.T."/>
            <person name="Guerra-Assuncao J.A."/>
            <person name="Zhou Y."/>
            <person name="Gu Y."/>
            <person name="Yen J."/>
            <person name="Vogel J.H."/>
            <person name="Eyre T."/>
            <person name="Redmond S."/>
            <person name="Banerjee R."/>
            <person name="Chi J."/>
            <person name="Fu B."/>
            <person name="Langley E."/>
            <person name="Maguire S.F."/>
            <person name="Laird G.K."/>
            <person name="Lloyd D."/>
            <person name="Kenyon E."/>
            <person name="Donaldson S."/>
            <person name="Sehra H."/>
            <person name="Almeida-King J."/>
            <person name="Loveland J."/>
            <person name="Trevanion S."/>
            <person name="Jones M."/>
            <person name="Quail M."/>
            <person name="Willey D."/>
            <person name="Hunt A."/>
            <person name="Burton J."/>
            <person name="Sims S."/>
            <person name="McLay K."/>
            <person name="Plumb B."/>
            <person name="Davis J."/>
            <person name="Clee C."/>
            <person name="Oliver K."/>
            <person name="Clark R."/>
            <person name="Riddle C."/>
            <person name="Elliot D."/>
            <person name="Threadgold G."/>
            <person name="Harden G."/>
            <person name="Ware D."/>
            <person name="Begum S."/>
            <person name="Mortimore B."/>
            <person name="Kerry G."/>
            <person name="Heath P."/>
            <person name="Phillimore B."/>
            <person name="Tracey A."/>
            <person name="Corby N."/>
            <person name="Dunn M."/>
            <person name="Johnson C."/>
            <person name="Wood J."/>
            <person name="Clark S."/>
            <person name="Pelan S."/>
            <person name="Griffiths G."/>
            <person name="Smith M."/>
            <person name="Glithero R."/>
            <person name="Howden P."/>
            <person name="Barker N."/>
            <person name="Lloyd C."/>
            <person name="Stevens C."/>
            <person name="Harley J."/>
            <person name="Holt K."/>
            <person name="Panagiotidis G."/>
            <person name="Lovell J."/>
            <person name="Beasley H."/>
            <person name="Henderson C."/>
            <person name="Gordon D."/>
            <person name="Auger K."/>
            <person name="Wright D."/>
            <person name="Collins J."/>
            <person name="Raisen C."/>
            <person name="Dyer L."/>
            <person name="Leung K."/>
            <person name="Robertson L."/>
            <person name="Ambridge K."/>
            <person name="Leongamornlert D."/>
            <person name="McGuire S."/>
            <person name="Gilderthorp R."/>
            <person name="Griffiths C."/>
            <person name="Manthravadi D."/>
            <person name="Nichol S."/>
            <person name="Barker G."/>
            <person name="Whitehead S."/>
            <person name="Kay M."/>
            <person name="Brown J."/>
            <person name="Murnane C."/>
            <person name="Gray E."/>
            <person name="Humphries M."/>
            <person name="Sycamore N."/>
            <person name="Barker D."/>
            <person name="Saunders D."/>
            <person name="Wallis J."/>
            <person name="Babbage A."/>
            <person name="Hammond S."/>
            <person name="Mashreghi-Mohammadi M."/>
            <person name="Barr L."/>
            <person name="Martin S."/>
            <person name="Wray P."/>
            <person name="Ellington A."/>
            <person name="Matthews N."/>
            <person name="Ellwood M."/>
            <person name="Woodmansey R."/>
            <person name="Clark G."/>
            <person name="Cooper J."/>
            <person name="Tromans A."/>
            <person name="Grafham D."/>
            <person name="Skuce C."/>
            <person name="Pandian R."/>
            <person name="Andrews R."/>
            <person name="Harrison E."/>
            <person name="Kimberley A."/>
            <person name="Garnett J."/>
            <person name="Fosker N."/>
            <person name="Hall R."/>
            <person name="Garner P."/>
            <person name="Kelly D."/>
            <person name="Bird C."/>
            <person name="Palmer S."/>
            <person name="Gehring I."/>
            <person name="Berger A."/>
            <person name="Dooley C.M."/>
            <person name="Ersan-Urun Z."/>
            <person name="Eser C."/>
            <person name="Geiger H."/>
            <person name="Geisler M."/>
            <person name="Karotki L."/>
            <person name="Kirn A."/>
            <person name="Konantz J."/>
            <person name="Konantz M."/>
            <person name="Oberlander M."/>
            <person name="Rudolph-Geiger S."/>
            <person name="Teucke M."/>
            <person name="Lanz C."/>
            <person name="Raddatz G."/>
            <person name="Osoegawa K."/>
            <person name="Zhu B."/>
            <person name="Rapp A."/>
            <person name="Widaa S."/>
            <person name="Langford C."/>
            <person name="Yang F."/>
            <person name="Schuster S.C."/>
            <person name="Carter N.P."/>
            <person name="Harrow J."/>
            <person name="Ning Z."/>
            <person name="Herrero J."/>
            <person name="Searle S.M."/>
            <person name="Enright A."/>
            <person name="Geisler R."/>
            <person name="Plasterk R.H."/>
            <person name="Lee C."/>
            <person name="Westerfield M."/>
            <person name="de Jong P.J."/>
            <person name="Zon L.I."/>
            <person name="Postlethwait J.H."/>
            <person name="Nusslein-Volhard C."/>
            <person name="Hubbard T.J."/>
            <person name="Roest Crollius H."/>
            <person name="Rogers J."/>
            <person name="Stemple D.L."/>
        </authorList>
    </citation>
    <scope>NUCLEOTIDE SEQUENCE [LARGE SCALE GENOMIC DNA]</scope>
    <source>
        <strain>Tuebingen</strain>
    </source>
</reference>
<reference key="2">
    <citation type="submission" date="2005-03" db="EMBL/GenBank/DDBJ databases">
        <authorList>
            <consortium name="NIH - Zebrafish Gene Collection (ZGC) project"/>
        </authorList>
    </citation>
    <scope>NUCLEOTIDE SEQUENCE [LARGE SCALE MRNA]</scope>
    <source>
        <tissue>Liver</tissue>
    </source>
</reference>
<sequence length="91" mass="10527">MWPIFWTAMRTYAPYVTFPVAFVVGAVGYHLEWFIRGTPNTPGEERGIAELREDRKLEELNGRDSTQVLSLKDKLEFTPRAVLERNRAVKS</sequence>
<name>SIM12_DANRE</name>
<gene>
    <name type="primary">smim12</name>
    <name type="ORF">si:ch73-31g16.1</name>
    <name type="ORF">zgc:103571</name>
</gene>